<accession>Q88K27</accession>
<proteinExistence type="inferred from homology"/>
<dbReference type="EC" id="6.1.1.3" evidence="1"/>
<dbReference type="EMBL" id="AE015451">
    <property type="protein sequence ID" value="AAN68077.1"/>
    <property type="molecule type" value="Genomic_DNA"/>
</dbReference>
<dbReference type="RefSeq" id="NP_744613.1">
    <property type="nucleotide sequence ID" value="NC_002947.4"/>
</dbReference>
<dbReference type="RefSeq" id="WP_010953409.1">
    <property type="nucleotide sequence ID" value="NZ_CP169744.1"/>
</dbReference>
<dbReference type="SMR" id="Q88K27"/>
<dbReference type="STRING" id="160488.PP_2465"/>
<dbReference type="PaxDb" id="160488-PP_2465"/>
<dbReference type="GeneID" id="83681014"/>
<dbReference type="KEGG" id="ppu:PP_2465"/>
<dbReference type="PATRIC" id="fig|160488.4.peg.2611"/>
<dbReference type="eggNOG" id="COG0441">
    <property type="taxonomic scope" value="Bacteria"/>
</dbReference>
<dbReference type="HOGENOM" id="CLU_008554_0_1_6"/>
<dbReference type="OrthoDB" id="9802304at2"/>
<dbReference type="PhylomeDB" id="Q88K27"/>
<dbReference type="BioCyc" id="PPUT160488:G1G01-2636-MONOMER"/>
<dbReference type="Proteomes" id="UP000000556">
    <property type="component" value="Chromosome"/>
</dbReference>
<dbReference type="GO" id="GO:0005829">
    <property type="term" value="C:cytosol"/>
    <property type="evidence" value="ECO:0007669"/>
    <property type="project" value="TreeGrafter"/>
</dbReference>
<dbReference type="GO" id="GO:0005524">
    <property type="term" value="F:ATP binding"/>
    <property type="evidence" value="ECO:0007669"/>
    <property type="project" value="UniProtKB-UniRule"/>
</dbReference>
<dbReference type="GO" id="GO:0046872">
    <property type="term" value="F:metal ion binding"/>
    <property type="evidence" value="ECO:0007669"/>
    <property type="project" value="UniProtKB-KW"/>
</dbReference>
<dbReference type="GO" id="GO:0004829">
    <property type="term" value="F:threonine-tRNA ligase activity"/>
    <property type="evidence" value="ECO:0007669"/>
    <property type="project" value="UniProtKB-UniRule"/>
</dbReference>
<dbReference type="GO" id="GO:0000049">
    <property type="term" value="F:tRNA binding"/>
    <property type="evidence" value="ECO:0007669"/>
    <property type="project" value="UniProtKB-KW"/>
</dbReference>
<dbReference type="GO" id="GO:0006435">
    <property type="term" value="P:threonyl-tRNA aminoacylation"/>
    <property type="evidence" value="ECO:0007669"/>
    <property type="project" value="UniProtKB-UniRule"/>
</dbReference>
<dbReference type="CDD" id="cd01667">
    <property type="entry name" value="TGS_ThrRS"/>
    <property type="match status" value="1"/>
</dbReference>
<dbReference type="CDD" id="cd00860">
    <property type="entry name" value="ThrRS_anticodon"/>
    <property type="match status" value="1"/>
</dbReference>
<dbReference type="CDD" id="cd00771">
    <property type="entry name" value="ThrRS_core"/>
    <property type="match status" value="1"/>
</dbReference>
<dbReference type="FunFam" id="3.10.20.30:FF:000005">
    <property type="entry name" value="Threonine--tRNA ligase"/>
    <property type="match status" value="1"/>
</dbReference>
<dbReference type="FunFam" id="3.30.54.20:FF:000002">
    <property type="entry name" value="Threonine--tRNA ligase"/>
    <property type="match status" value="1"/>
</dbReference>
<dbReference type="FunFam" id="3.30.930.10:FF:000002">
    <property type="entry name" value="Threonine--tRNA ligase"/>
    <property type="match status" value="1"/>
</dbReference>
<dbReference type="FunFam" id="3.40.50.800:FF:000001">
    <property type="entry name" value="Threonine--tRNA ligase"/>
    <property type="match status" value="1"/>
</dbReference>
<dbReference type="FunFam" id="3.30.980.10:FF:000005">
    <property type="entry name" value="Threonyl-tRNA synthetase, mitochondrial"/>
    <property type="match status" value="1"/>
</dbReference>
<dbReference type="Gene3D" id="3.10.20.30">
    <property type="match status" value="1"/>
</dbReference>
<dbReference type="Gene3D" id="3.30.54.20">
    <property type="match status" value="1"/>
</dbReference>
<dbReference type="Gene3D" id="3.40.50.800">
    <property type="entry name" value="Anticodon-binding domain"/>
    <property type="match status" value="1"/>
</dbReference>
<dbReference type="Gene3D" id="3.30.930.10">
    <property type="entry name" value="Bira Bifunctional Protein, Domain 2"/>
    <property type="match status" value="1"/>
</dbReference>
<dbReference type="Gene3D" id="3.30.980.10">
    <property type="entry name" value="Threonyl-trna Synthetase, Chain A, domain 2"/>
    <property type="match status" value="1"/>
</dbReference>
<dbReference type="HAMAP" id="MF_00184">
    <property type="entry name" value="Thr_tRNA_synth"/>
    <property type="match status" value="1"/>
</dbReference>
<dbReference type="InterPro" id="IPR002314">
    <property type="entry name" value="aa-tRNA-synt_IIb"/>
</dbReference>
<dbReference type="InterPro" id="IPR006195">
    <property type="entry name" value="aa-tRNA-synth_II"/>
</dbReference>
<dbReference type="InterPro" id="IPR045864">
    <property type="entry name" value="aa-tRNA-synth_II/BPL/LPL"/>
</dbReference>
<dbReference type="InterPro" id="IPR004154">
    <property type="entry name" value="Anticodon-bd"/>
</dbReference>
<dbReference type="InterPro" id="IPR036621">
    <property type="entry name" value="Anticodon-bd_dom_sf"/>
</dbReference>
<dbReference type="InterPro" id="IPR012675">
    <property type="entry name" value="Beta-grasp_dom_sf"/>
</dbReference>
<dbReference type="InterPro" id="IPR004095">
    <property type="entry name" value="TGS"/>
</dbReference>
<dbReference type="InterPro" id="IPR012676">
    <property type="entry name" value="TGS-like"/>
</dbReference>
<dbReference type="InterPro" id="IPR002320">
    <property type="entry name" value="Thr-tRNA-ligase_IIa"/>
</dbReference>
<dbReference type="InterPro" id="IPR018163">
    <property type="entry name" value="Thr/Ala-tRNA-synth_IIc_edit"/>
</dbReference>
<dbReference type="InterPro" id="IPR047246">
    <property type="entry name" value="ThrRS_anticodon"/>
</dbReference>
<dbReference type="InterPro" id="IPR033728">
    <property type="entry name" value="ThrRS_core"/>
</dbReference>
<dbReference type="InterPro" id="IPR012947">
    <property type="entry name" value="tRNA_SAD"/>
</dbReference>
<dbReference type="NCBIfam" id="TIGR00418">
    <property type="entry name" value="thrS"/>
    <property type="match status" value="1"/>
</dbReference>
<dbReference type="PANTHER" id="PTHR11451:SF44">
    <property type="entry name" value="THREONINE--TRNA LIGASE, CHLOROPLASTIC_MITOCHONDRIAL 2"/>
    <property type="match status" value="1"/>
</dbReference>
<dbReference type="PANTHER" id="PTHR11451">
    <property type="entry name" value="THREONINE-TRNA LIGASE"/>
    <property type="match status" value="1"/>
</dbReference>
<dbReference type="Pfam" id="PF03129">
    <property type="entry name" value="HGTP_anticodon"/>
    <property type="match status" value="1"/>
</dbReference>
<dbReference type="Pfam" id="PF02824">
    <property type="entry name" value="TGS"/>
    <property type="match status" value="1"/>
</dbReference>
<dbReference type="Pfam" id="PF00587">
    <property type="entry name" value="tRNA-synt_2b"/>
    <property type="match status" value="1"/>
</dbReference>
<dbReference type="Pfam" id="PF07973">
    <property type="entry name" value="tRNA_SAD"/>
    <property type="match status" value="1"/>
</dbReference>
<dbReference type="PRINTS" id="PR01047">
    <property type="entry name" value="TRNASYNTHTHR"/>
</dbReference>
<dbReference type="SMART" id="SM00863">
    <property type="entry name" value="tRNA_SAD"/>
    <property type="match status" value="1"/>
</dbReference>
<dbReference type="SUPFAM" id="SSF52954">
    <property type="entry name" value="Class II aaRS ABD-related"/>
    <property type="match status" value="1"/>
</dbReference>
<dbReference type="SUPFAM" id="SSF55681">
    <property type="entry name" value="Class II aaRS and biotin synthetases"/>
    <property type="match status" value="1"/>
</dbReference>
<dbReference type="SUPFAM" id="SSF81271">
    <property type="entry name" value="TGS-like"/>
    <property type="match status" value="1"/>
</dbReference>
<dbReference type="SUPFAM" id="SSF55186">
    <property type="entry name" value="ThrRS/AlaRS common domain"/>
    <property type="match status" value="1"/>
</dbReference>
<dbReference type="PROSITE" id="PS50862">
    <property type="entry name" value="AA_TRNA_LIGASE_II"/>
    <property type="match status" value="1"/>
</dbReference>
<dbReference type="PROSITE" id="PS51880">
    <property type="entry name" value="TGS"/>
    <property type="match status" value="1"/>
</dbReference>
<reference key="1">
    <citation type="journal article" date="2002" name="Environ. Microbiol.">
        <title>Complete genome sequence and comparative analysis of the metabolically versatile Pseudomonas putida KT2440.</title>
        <authorList>
            <person name="Nelson K.E."/>
            <person name="Weinel C."/>
            <person name="Paulsen I.T."/>
            <person name="Dodson R.J."/>
            <person name="Hilbert H."/>
            <person name="Martins dos Santos V.A.P."/>
            <person name="Fouts D.E."/>
            <person name="Gill S.R."/>
            <person name="Pop M."/>
            <person name="Holmes M."/>
            <person name="Brinkac L.M."/>
            <person name="Beanan M.J."/>
            <person name="DeBoy R.T."/>
            <person name="Daugherty S.C."/>
            <person name="Kolonay J.F."/>
            <person name="Madupu R."/>
            <person name="Nelson W.C."/>
            <person name="White O."/>
            <person name="Peterson J.D."/>
            <person name="Khouri H.M."/>
            <person name="Hance I."/>
            <person name="Chris Lee P."/>
            <person name="Holtzapple E.K."/>
            <person name="Scanlan D."/>
            <person name="Tran K."/>
            <person name="Moazzez A."/>
            <person name="Utterback T.R."/>
            <person name="Rizzo M."/>
            <person name="Lee K."/>
            <person name="Kosack D."/>
            <person name="Moestl D."/>
            <person name="Wedler H."/>
            <person name="Lauber J."/>
            <person name="Stjepandic D."/>
            <person name="Hoheisel J."/>
            <person name="Straetz M."/>
            <person name="Heim S."/>
            <person name="Kiewitz C."/>
            <person name="Eisen J.A."/>
            <person name="Timmis K.N."/>
            <person name="Duesterhoeft A."/>
            <person name="Tuemmler B."/>
            <person name="Fraser C.M."/>
        </authorList>
    </citation>
    <scope>NUCLEOTIDE SEQUENCE [LARGE SCALE GENOMIC DNA]</scope>
    <source>
        <strain>ATCC 47054 / DSM 6125 / CFBP 8728 / NCIMB 11950 / KT2440</strain>
    </source>
</reference>
<keyword id="KW-0030">Aminoacyl-tRNA synthetase</keyword>
<keyword id="KW-0067">ATP-binding</keyword>
<keyword id="KW-0963">Cytoplasm</keyword>
<keyword id="KW-0436">Ligase</keyword>
<keyword id="KW-0479">Metal-binding</keyword>
<keyword id="KW-0547">Nucleotide-binding</keyword>
<keyword id="KW-0648">Protein biosynthesis</keyword>
<keyword id="KW-1185">Reference proteome</keyword>
<keyword id="KW-0694">RNA-binding</keyword>
<keyword id="KW-0820">tRNA-binding</keyword>
<keyword id="KW-0862">Zinc</keyword>
<evidence type="ECO:0000255" key="1">
    <source>
        <dbReference type="HAMAP-Rule" id="MF_00184"/>
    </source>
</evidence>
<evidence type="ECO:0000255" key="2">
    <source>
        <dbReference type="PROSITE-ProRule" id="PRU01228"/>
    </source>
</evidence>
<gene>
    <name evidence="1" type="primary">thrS</name>
    <name type="ordered locus">PP_2465</name>
</gene>
<protein>
    <recommendedName>
        <fullName evidence="1">Threonine--tRNA ligase</fullName>
        <ecNumber evidence="1">6.1.1.3</ecNumber>
    </recommendedName>
    <alternativeName>
        <fullName evidence="1">Threonyl-tRNA synthetase</fullName>
        <shortName evidence="1">ThrRS</shortName>
    </alternativeName>
</protein>
<sequence>MPVITLPDGSQRSFDHAVSVAEVAASIGAGLAKATVAGKVDGKLVDACDLISNDATLQIITPKDEEGLEIIRHSCAHLVGHAVKQLYPTAKMVIGPVIDEGFYYDIAYERPFTPEDMAAIEKRMMELIEKDYDVVKKMTPRAEVIDVFKARGEDYKLRLVEDMPDEQAMGLYYHEEYVDMCRGPHVPNTRFLKAFKLTKLSGAYWRGDAKNEQLQRVYGTAWADKKQLAAYIQRIEEAEKRDHRKIGKQLDLFHLQEEAPGMVFWHANGWTVYQVLEQYMRGVQRENGYQEIKTPQVVDRILWERSGHWSNYAENMFTTSSESRDYAVKPMNCPCHVQVFNQGLKSYRDLPLRLAEFGACHRNEPSGALHGIMRVRGFVQDDAHIFCTEDQVKKEAADFIKLTLDVYKDFGFSDIAMKLSTRPAKRVGSEELWDRAETALADALNESGLEWEYQPGEGAFYGPKIEFTLRDCLGRNWQCGTLQYDPNLPERLDASYIAEDNSRVRPVMLHRAILGSFERFIGMLIEHYAGVFPAWLAPTQAVIMNITDKQADFALEVEKSLNGSGFRAKSDLRNEKIGFKIREHTLLKVPYLLVIGDREVETQTVAVRTREGADLGSMPVAQFVELLTQAVSRRGRQESE</sequence>
<organism>
    <name type="scientific">Pseudomonas putida (strain ATCC 47054 / DSM 6125 / CFBP 8728 / NCIMB 11950 / KT2440)</name>
    <dbReference type="NCBI Taxonomy" id="160488"/>
    <lineage>
        <taxon>Bacteria</taxon>
        <taxon>Pseudomonadati</taxon>
        <taxon>Pseudomonadota</taxon>
        <taxon>Gammaproteobacteria</taxon>
        <taxon>Pseudomonadales</taxon>
        <taxon>Pseudomonadaceae</taxon>
        <taxon>Pseudomonas</taxon>
    </lineage>
</organism>
<comment type="function">
    <text evidence="1">Catalyzes the attachment of threonine to tRNA(Thr) in a two-step reaction: L-threonine is first activated by ATP to form Thr-AMP and then transferred to the acceptor end of tRNA(Thr). Also edits incorrectly charged L-seryl-tRNA(Thr).</text>
</comment>
<comment type="catalytic activity">
    <reaction evidence="1">
        <text>tRNA(Thr) + L-threonine + ATP = L-threonyl-tRNA(Thr) + AMP + diphosphate + H(+)</text>
        <dbReference type="Rhea" id="RHEA:24624"/>
        <dbReference type="Rhea" id="RHEA-COMP:9670"/>
        <dbReference type="Rhea" id="RHEA-COMP:9704"/>
        <dbReference type="ChEBI" id="CHEBI:15378"/>
        <dbReference type="ChEBI" id="CHEBI:30616"/>
        <dbReference type="ChEBI" id="CHEBI:33019"/>
        <dbReference type="ChEBI" id="CHEBI:57926"/>
        <dbReference type="ChEBI" id="CHEBI:78442"/>
        <dbReference type="ChEBI" id="CHEBI:78534"/>
        <dbReference type="ChEBI" id="CHEBI:456215"/>
        <dbReference type="EC" id="6.1.1.3"/>
    </reaction>
</comment>
<comment type="cofactor">
    <cofactor evidence="1">
        <name>Zn(2+)</name>
        <dbReference type="ChEBI" id="CHEBI:29105"/>
    </cofactor>
    <text evidence="1">Binds 1 zinc ion per subunit.</text>
</comment>
<comment type="subunit">
    <text evidence="1">Homodimer.</text>
</comment>
<comment type="subcellular location">
    <subcellularLocation>
        <location evidence="1">Cytoplasm</location>
    </subcellularLocation>
</comment>
<comment type="similarity">
    <text evidence="1">Belongs to the class-II aminoacyl-tRNA synthetase family.</text>
</comment>
<feature type="chain" id="PRO_0000101028" description="Threonine--tRNA ligase">
    <location>
        <begin position="1"/>
        <end position="640"/>
    </location>
</feature>
<feature type="domain" description="TGS" evidence="2">
    <location>
        <begin position="1"/>
        <end position="61"/>
    </location>
</feature>
<feature type="region of interest" description="Catalytic" evidence="1">
    <location>
        <begin position="242"/>
        <end position="533"/>
    </location>
</feature>
<feature type="binding site" evidence="1">
    <location>
        <position position="333"/>
    </location>
    <ligand>
        <name>Zn(2+)</name>
        <dbReference type="ChEBI" id="CHEBI:29105"/>
    </ligand>
</feature>
<feature type="binding site" evidence="1">
    <location>
        <position position="384"/>
    </location>
    <ligand>
        <name>Zn(2+)</name>
        <dbReference type="ChEBI" id="CHEBI:29105"/>
    </ligand>
</feature>
<feature type="binding site" evidence="1">
    <location>
        <position position="510"/>
    </location>
    <ligand>
        <name>Zn(2+)</name>
        <dbReference type="ChEBI" id="CHEBI:29105"/>
    </ligand>
</feature>
<name>SYT_PSEPK</name>